<evidence type="ECO:0000255" key="1">
    <source>
        <dbReference type="HAMAP-Rule" id="MF_00061"/>
    </source>
</evidence>
<sequence length="282" mass="30757">MTHWPSPAKLNLFLYITGQRADGYHTLQTLFQFLDYGDTLHIEPRRDGEIHLLTPVNGVENEDNLIVRAAQLLMKIASESGRLPAGSGADISIEKRLPMGGGLGGGSSNAATVLVALNHLWQCGLSIDELATLGLTLGADVPVFVRGHAAFAEGVGEILTPVNPPEKWYLVAHPGVSIPTPVIFKDPQLPRNTPKRSIDTLLKCEFSNDCEVIARKRFREVDAALSWLLEYAPSRLTGTGACVFAEFDTESCARQVLEQAPEWLNAFVAKGVNLSPLHRELL</sequence>
<accession>Q5PCR2</accession>
<keyword id="KW-0067">ATP-binding</keyword>
<keyword id="KW-0414">Isoprene biosynthesis</keyword>
<keyword id="KW-0418">Kinase</keyword>
<keyword id="KW-0547">Nucleotide-binding</keyword>
<keyword id="KW-0808">Transferase</keyword>
<reference key="1">
    <citation type="journal article" date="2004" name="Nat. Genet.">
        <title>Comparison of genome degradation in Paratyphi A and Typhi, human-restricted serovars of Salmonella enterica that cause typhoid.</title>
        <authorList>
            <person name="McClelland M."/>
            <person name="Sanderson K.E."/>
            <person name="Clifton S.W."/>
            <person name="Latreille P."/>
            <person name="Porwollik S."/>
            <person name="Sabo A."/>
            <person name="Meyer R."/>
            <person name="Bieri T."/>
            <person name="Ozersky P."/>
            <person name="McLellan M."/>
            <person name="Harkins C.R."/>
            <person name="Wang C."/>
            <person name="Nguyen C."/>
            <person name="Berghoff A."/>
            <person name="Elliott G."/>
            <person name="Kohlberg S."/>
            <person name="Strong C."/>
            <person name="Du F."/>
            <person name="Carter J."/>
            <person name="Kremizki C."/>
            <person name="Layman D."/>
            <person name="Leonard S."/>
            <person name="Sun H."/>
            <person name="Fulton L."/>
            <person name="Nash W."/>
            <person name="Miner T."/>
            <person name="Minx P."/>
            <person name="Delehaunty K."/>
            <person name="Fronick C."/>
            <person name="Magrini V."/>
            <person name="Nhan M."/>
            <person name="Warren W."/>
            <person name="Florea L."/>
            <person name="Spieth J."/>
            <person name="Wilson R.K."/>
        </authorList>
    </citation>
    <scope>NUCLEOTIDE SEQUENCE [LARGE SCALE GENOMIC DNA]</scope>
    <source>
        <strain>ATCC 9150 / SARB42</strain>
    </source>
</reference>
<feature type="chain" id="PRO_0000235128" description="4-diphosphocytidyl-2-C-methyl-D-erythritol kinase">
    <location>
        <begin position="1"/>
        <end position="282"/>
    </location>
</feature>
<feature type="active site" evidence="1">
    <location>
        <position position="9"/>
    </location>
</feature>
<feature type="active site" evidence="1">
    <location>
        <position position="140"/>
    </location>
</feature>
<feature type="binding site" evidence="1">
    <location>
        <begin position="98"/>
        <end position="108"/>
    </location>
    <ligand>
        <name>ATP</name>
        <dbReference type="ChEBI" id="CHEBI:30616"/>
    </ligand>
</feature>
<proteinExistence type="inferred from homology"/>
<gene>
    <name evidence="1" type="primary">ispE</name>
    <name type="ordered locus">SPA1094</name>
</gene>
<organism>
    <name type="scientific">Salmonella paratyphi A (strain ATCC 9150 / SARB42)</name>
    <dbReference type="NCBI Taxonomy" id="295319"/>
    <lineage>
        <taxon>Bacteria</taxon>
        <taxon>Pseudomonadati</taxon>
        <taxon>Pseudomonadota</taxon>
        <taxon>Gammaproteobacteria</taxon>
        <taxon>Enterobacterales</taxon>
        <taxon>Enterobacteriaceae</taxon>
        <taxon>Salmonella</taxon>
    </lineage>
</organism>
<dbReference type="EC" id="2.7.1.148" evidence="1"/>
<dbReference type="EMBL" id="CP000026">
    <property type="protein sequence ID" value="AAV77063.1"/>
    <property type="molecule type" value="Genomic_DNA"/>
</dbReference>
<dbReference type="SMR" id="Q5PCR2"/>
<dbReference type="KEGG" id="spt:SPA1094"/>
<dbReference type="HOGENOM" id="CLU_053057_3_0_6"/>
<dbReference type="UniPathway" id="UPA00056">
    <property type="reaction ID" value="UER00094"/>
</dbReference>
<dbReference type="Proteomes" id="UP000008185">
    <property type="component" value="Chromosome"/>
</dbReference>
<dbReference type="GO" id="GO:0050515">
    <property type="term" value="F:4-(cytidine 5'-diphospho)-2-C-methyl-D-erythritol kinase activity"/>
    <property type="evidence" value="ECO:0007669"/>
    <property type="project" value="UniProtKB-UniRule"/>
</dbReference>
<dbReference type="GO" id="GO:0005524">
    <property type="term" value="F:ATP binding"/>
    <property type="evidence" value="ECO:0007669"/>
    <property type="project" value="UniProtKB-UniRule"/>
</dbReference>
<dbReference type="GO" id="GO:0019288">
    <property type="term" value="P:isopentenyl diphosphate biosynthetic process, methylerythritol 4-phosphate pathway"/>
    <property type="evidence" value="ECO:0007669"/>
    <property type="project" value="UniProtKB-UniRule"/>
</dbReference>
<dbReference type="GO" id="GO:0016114">
    <property type="term" value="P:terpenoid biosynthetic process"/>
    <property type="evidence" value="ECO:0007669"/>
    <property type="project" value="InterPro"/>
</dbReference>
<dbReference type="FunFam" id="3.30.230.10:FF:000022">
    <property type="entry name" value="4-diphosphocytidyl-2-C-methyl-D-erythritol kinase"/>
    <property type="match status" value="1"/>
</dbReference>
<dbReference type="FunFam" id="3.30.70.890:FF:000004">
    <property type="entry name" value="4-diphosphocytidyl-2-C-methyl-D-erythritol kinase"/>
    <property type="match status" value="1"/>
</dbReference>
<dbReference type="Gene3D" id="3.30.230.10">
    <property type="match status" value="1"/>
</dbReference>
<dbReference type="Gene3D" id="3.30.70.890">
    <property type="entry name" value="GHMP kinase, C-terminal domain"/>
    <property type="match status" value="1"/>
</dbReference>
<dbReference type="HAMAP" id="MF_00061">
    <property type="entry name" value="IspE"/>
    <property type="match status" value="1"/>
</dbReference>
<dbReference type="InterPro" id="IPR013750">
    <property type="entry name" value="GHMP_kinase_C_dom"/>
</dbReference>
<dbReference type="InterPro" id="IPR036554">
    <property type="entry name" value="GHMP_kinase_C_sf"/>
</dbReference>
<dbReference type="InterPro" id="IPR006204">
    <property type="entry name" value="GHMP_kinase_N_dom"/>
</dbReference>
<dbReference type="InterPro" id="IPR004424">
    <property type="entry name" value="IspE"/>
</dbReference>
<dbReference type="InterPro" id="IPR020568">
    <property type="entry name" value="Ribosomal_Su5_D2-typ_SF"/>
</dbReference>
<dbReference type="InterPro" id="IPR014721">
    <property type="entry name" value="Ribsml_uS5_D2-typ_fold_subgr"/>
</dbReference>
<dbReference type="NCBIfam" id="TIGR00154">
    <property type="entry name" value="ispE"/>
    <property type="match status" value="1"/>
</dbReference>
<dbReference type="PANTHER" id="PTHR43527">
    <property type="entry name" value="4-DIPHOSPHOCYTIDYL-2-C-METHYL-D-ERYTHRITOL KINASE, CHLOROPLASTIC"/>
    <property type="match status" value="1"/>
</dbReference>
<dbReference type="PANTHER" id="PTHR43527:SF2">
    <property type="entry name" value="4-DIPHOSPHOCYTIDYL-2-C-METHYL-D-ERYTHRITOL KINASE, CHLOROPLASTIC"/>
    <property type="match status" value="1"/>
</dbReference>
<dbReference type="Pfam" id="PF08544">
    <property type="entry name" value="GHMP_kinases_C"/>
    <property type="match status" value="1"/>
</dbReference>
<dbReference type="Pfam" id="PF00288">
    <property type="entry name" value="GHMP_kinases_N"/>
    <property type="match status" value="1"/>
</dbReference>
<dbReference type="PIRSF" id="PIRSF010376">
    <property type="entry name" value="IspE"/>
    <property type="match status" value="1"/>
</dbReference>
<dbReference type="SUPFAM" id="SSF55060">
    <property type="entry name" value="GHMP Kinase, C-terminal domain"/>
    <property type="match status" value="1"/>
</dbReference>
<dbReference type="SUPFAM" id="SSF54211">
    <property type="entry name" value="Ribosomal protein S5 domain 2-like"/>
    <property type="match status" value="1"/>
</dbReference>
<comment type="function">
    <text evidence="1">Catalyzes the phosphorylation of the position 2 hydroxy group of 4-diphosphocytidyl-2C-methyl-D-erythritol.</text>
</comment>
<comment type="catalytic activity">
    <reaction evidence="1">
        <text>4-CDP-2-C-methyl-D-erythritol + ATP = 4-CDP-2-C-methyl-D-erythritol 2-phosphate + ADP + H(+)</text>
        <dbReference type="Rhea" id="RHEA:18437"/>
        <dbReference type="ChEBI" id="CHEBI:15378"/>
        <dbReference type="ChEBI" id="CHEBI:30616"/>
        <dbReference type="ChEBI" id="CHEBI:57823"/>
        <dbReference type="ChEBI" id="CHEBI:57919"/>
        <dbReference type="ChEBI" id="CHEBI:456216"/>
        <dbReference type="EC" id="2.7.1.148"/>
    </reaction>
</comment>
<comment type="pathway">
    <text evidence="1">Isoprenoid biosynthesis; isopentenyl diphosphate biosynthesis via DXP pathway; isopentenyl diphosphate from 1-deoxy-D-xylulose 5-phosphate: step 3/6.</text>
</comment>
<comment type="subunit">
    <text evidence="1">Homodimer.</text>
</comment>
<comment type="similarity">
    <text evidence="1">Belongs to the GHMP kinase family. IspE subfamily.</text>
</comment>
<name>ISPE_SALPA</name>
<protein>
    <recommendedName>
        <fullName evidence="1">4-diphosphocytidyl-2-C-methyl-D-erythritol kinase</fullName>
        <shortName evidence="1">CMK</shortName>
        <ecNumber evidence="1">2.7.1.148</ecNumber>
    </recommendedName>
    <alternativeName>
        <fullName evidence="1">4-(cytidine-5'-diphospho)-2-C-methyl-D-erythritol kinase</fullName>
    </alternativeName>
</protein>